<reference evidence="6" key="1">
    <citation type="journal article" date="2012" name="Biol. Chem.">
        <title>Development of a host blood meal database: de novo sequencing of hemoglobin from nine small mammals using mass spectrometry.</title>
        <authorList>
            <person name="Laskay U.A."/>
            <person name="Burg J."/>
            <person name="Kaleta E.J."/>
            <person name="Vilcins I.M."/>
            <person name="Telford Iii S.R."/>
            <person name="Barbour A.G."/>
            <person name="Wysocki V.H."/>
        </authorList>
    </citation>
    <scope>PROTEIN SEQUENCE</scope>
    <source>
        <tissue evidence="4">Erythrocyte</tissue>
    </source>
</reference>
<keyword id="KW-0007">Acetylation</keyword>
<keyword id="KW-0903">Direct protein sequencing</keyword>
<keyword id="KW-0349">Heme</keyword>
<keyword id="KW-0408">Iron</keyword>
<keyword id="KW-0479">Metal-binding</keyword>
<keyword id="KW-0561">Oxygen transport</keyword>
<keyword id="KW-0597">Phosphoprotein</keyword>
<keyword id="KW-0813">Transport</keyword>
<name>HBA_PERCR</name>
<organism>
    <name type="scientific">Peromyscus crinitus</name>
    <name type="common">Canyon mouse</name>
    <dbReference type="NCBI Taxonomy" id="144753"/>
    <lineage>
        <taxon>Eukaryota</taxon>
        <taxon>Metazoa</taxon>
        <taxon>Chordata</taxon>
        <taxon>Craniata</taxon>
        <taxon>Vertebrata</taxon>
        <taxon>Euteleostomi</taxon>
        <taxon>Mammalia</taxon>
        <taxon>Eutheria</taxon>
        <taxon>Euarchontoglires</taxon>
        <taxon>Glires</taxon>
        <taxon>Rodentia</taxon>
        <taxon>Myomorpha</taxon>
        <taxon>Muroidea</taxon>
        <taxon>Cricetidae</taxon>
        <taxon>Neotominae</taxon>
        <taxon>Peromyscus</taxon>
    </lineage>
</organism>
<comment type="function">
    <text evidence="6">Involved in oxygen transport from the lung to the various peripheral tissues.</text>
</comment>
<comment type="subunit">
    <text evidence="6">Heterotetramer of two alpha chains and two beta chains.</text>
</comment>
<comment type="tissue specificity">
    <text evidence="6">Red blood cells.</text>
</comment>
<comment type="similarity">
    <text evidence="3">Belongs to the globin family.</text>
</comment>
<accession>B3EWD3</accession>
<feature type="chain" id="PRO_0000415587" description="Hemoglobin subunit alpha">
    <location>
        <begin position="1"/>
        <end position="141"/>
    </location>
</feature>
<feature type="domain" description="Globin" evidence="3">
    <location>
        <begin position="1"/>
        <end position="141"/>
    </location>
</feature>
<feature type="binding site" evidence="3">
    <location>
        <position position="58"/>
    </location>
    <ligand>
        <name>O2</name>
        <dbReference type="ChEBI" id="CHEBI:15379"/>
    </ligand>
</feature>
<feature type="binding site" description="proximal binding residue" evidence="3">
    <location>
        <position position="87"/>
    </location>
    <ligand>
        <name>heme b</name>
        <dbReference type="ChEBI" id="CHEBI:60344"/>
    </ligand>
    <ligandPart>
        <name>Fe</name>
        <dbReference type="ChEBI" id="CHEBI:18248"/>
    </ligandPart>
</feature>
<feature type="modified residue" description="Phosphoserine" evidence="2">
    <location>
        <position position="3"/>
    </location>
</feature>
<feature type="modified residue" description="N6-succinyllysine" evidence="1">
    <location>
        <position position="7"/>
    </location>
</feature>
<feature type="modified residue" description="N6-succinyllysine" evidence="1">
    <location>
        <position position="11"/>
    </location>
</feature>
<feature type="modified residue" description="N6-acetyllysine; alternate" evidence="2">
    <location>
        <position position="16"/>
    </location>
</feature>
<feature type="modified residue" description="N6-succinyllysine; alternate" evidence="1">
    <location>
        <position position="16"/>
    </location>
</feature>
<feature type="modified residue" description="Phosphotyrosine" evidence="2">
    <location>
        <position position="24"/>
    </location>
</feature>
<feature type="modified residue" description="Phosphoserine" evidence="2">
    <location>
        <position position="35"/>
    </location>
</feature>
<feature type="modified residue" description="N6-succinyllysine" evidence="1">
    <location>
        <position position="40"/>
    </location>
</feature>
<feature type="modified residue" description="Phosphoserine" evidence="2">
    <location>
        <position position="49"/>
    </location>
</feature>
<feature type="modified residue" description="Phosphoserine" evidence="1">
    <location>
        <position position="102"/>
    </location>
</feature>
<feature type="modified residue" description="Phosphothreonine" evidence="1">
    <location>
        <position position="108"/>
    </location>
</feature>
<feature type="modified residue" description="Phosphoserine" evidence="1">
    <location>
        <position position="124"/>
    </location>
</feature>
<feature type="modified residue" description="Phosphoserine" evidence="1">
    <location>
        <position position="131"/>
    </location>
</feature>
<feature type="modified residue" description="Phosphothreonine" evidence="1">
    <location>
        <position position="134"/>
    </location>
</feature>
<feature type="modified residue" description="Phosphothreonine" evidence="1">
    <location>
        <position position="137"/>
    </location>
</feature>
<feature type="modified residue" description="Phosphoserine" evidence="1">
    <location>
        <position position="138"/>
    </location>
</feature>
<feature type="unsure residue" description="L or I" evidence="4">
    <location>
        <position position="2"/>
    </location>
</feature>
<feature type="unsure residue" description="L or I" evidence="4">
    <location>
        <position position="17"/>
    </location>
</feature>
<feature type="unsure residue" description="L or I" evidence="4">
    <location>
        <position position="29"/>
    </location>
</feature>
<feature type="unsure residue" description="L or I" evidence="4">
    <location>
        <position position="66"/>
    </location>
</feature>
<feature type="unsure residue" description="L or I" evidence="4">
    <location>
        <position position="73"/>
    </location>
</feature>
<feature type="unsure residue" description="L or I" evidence="4">
    <location>
        <position position="76"/>
    </location>
</feature>
<feature type="unsure residue" description="L or I" evidence="4">
    <location>
        <position position="80"/>
    </location>
</feature>
<feature type="unsure residue" description="L or I" evidence="4">
    <location>
        <position position="83"/>
    </location>
</feature>
<feature type="unsure residue" description="L or I" evidence="4">
    <location>
        <position position="86"/>
    </location>
</feature>
<feature type="unsure residue" description="L or I" evidence="4">
    <location>
        <position position="91"/>
    </location>
</feature>
<feature type="unsure residue" description="L or I" evidence="4">
    <location>
        <position position="100"/>
    </location>
</feature>
<feature type="unsure residue" description="L or I" evidence="4">
    <location>
        <position position="101"/>
    </location>
</feature>
<feature type="unsure residue" description="L or I" evidence="4">
    <location>
        <position position="105"/>
    </location>
</feature>
<feature type="unsure residue" description="L or I" evidence="4">
    <location>
        <position position="106"/>
    </location>
</feature>
<feature type="unsure residue" description="L or I" evidence="4">
    <location>
        <position position="109"/>
    </location>
</feature>
<feature type="unsure residue" description="L or I" evidence="4">
    <location>
        <position position="125"/>
    </location>
</feature>
<feature type="unsure residue" description="L or I" evidence="4">
    <location>
        <position position="129"/>
    </location>
</feature>
<feature type="unsure residue" description="L or I" evidence="4">
    <location>
        <position position="136"/>
    </location>
</feature>
<evidence type="ECO:0000250" key="1">
    <source>
        <dbReference type="UniProtKB" id="P01942"/>
    </source>
</evidence>
<evidence type="ECO:0000250" key="2">
    <source>
        <dbReference type="UniProtKB" id="P69905"/>
    </source>
</evidence>
<evidence type="ECO:0000255" key="3">
    <source>
        <dbReference type="PROSITE-ProRule" id="PRU00238"/>
    </source>
</evidence>
<evidence type="ECO:0000269" key="4">
    <source>
    </source>
</evidence>
<evidence type="ECO:0000303" key="5">
    <source>
    </source>
</evidence>
<evidence type="ECO:0000305" key="6"/>
<sequence length="141" mass="14986">VLSAEDKANVKAVWSKLGGHGAEYGAEALGRMFESHPTTKTYPFHFDVSHGSAQVKGHGKKVADALATAASHLDDLPGALSALSDLHAHKLRVDPVNFKLLSHCLLVTLAAHHPAEFTPAAHASLDKFLASVSTVLTSKYR</sequence>
<proteinExistence type="evidence at protein level"/>
<protein>
    <recommendedName>
        <fullName evidence="5">Hemoglobin subunit alpha</fullName>
    </recommendedName>
</protein>
<dbReference type="SMR" id="B3EWD3"/>
<dbReference type="GO" id="GO:0072562">
    <property type="term" value="C:blood microparticle"/>
    <property type="evidence" value="ECO:0007669"/>
    <property type="project" value="TreeGrafter"/>
</dbReference>
<dbReference type="GO" id="GO:0031838">
    <property type="term" value="C:haptoglobin-hemoglobin complex"/>
    <property type="evidence" value="ECO:0007669"/>
    <property type="project" value="TreeGrafter"/>
</dbReference>
<dbReference type="GO" id="GO:0005833">
    <property type="term" value="C:hemoglobin complex"/>
    <property type="evidence" value="ECO:0007669"/>
    <property type="project" value="InterPro"/>
</dbReference>
<dbReference type="GO" id="GO:0031720">
    <property type="term" value="F:haptoglobin binding"/>
    <property type="evidence" value="ECO:0007669"/>
    <property type="project" value="TreeGrafter"/>
</dbReference>
<dbReference type="GO" id="GO:0020037">
    <property type="term" value="F:heme binding"/>
    <property type="evidence" value="ECO:0007669"/>
    <property type="project" value="InterPro"/>
</dbReference>
<dbReference type="GO" id="GO:0005506">
    <property type="term" value="F:iron ion binding"/>
    <property type="evidence" value="ECO:0007669"/>
    <property type="project" value="InterPro"/>
</dbReference>
<dbReference type="GO" id="GO:0043177">
    <property type="term" value="F:organic acid binding"/>
    <property type="evidence" value="ECO:0007669"/>
    <property type="project" value="TreeGrafter"/>
</dbReference>
<dbReference type="GO" id="GO:0019825">
    <property type="term" value="F:oxygen binding"/>
    <property type="evidence" value="ECO:0007669"/>
    <property type="project" value="InterPro"/>
</dbReference>
<dbReference type="GO" id="GO:0005344">
    <property type="term" value="F:oxygen carrier activity"/>
    <property type="evidence" value="ECO:0007669"/>
    <property type="project" value="UniProtKB-KW"/>
</dbReference>
<dbReference type="GO" id="GO:0004601">
    <property type="term" value="F:peroxidase activity"/>
    <property type="evidence" value="ECO:0007669"/>
    <property type="project" value="TreeGrafter"/>
</dbReference>
<dbReference type="GO" id="GO:0042744">
    <property type="term" value="P:hydrogen peroxide catabolic process"/>
    <property type="evidence" value="ECO:0007669"/>
    <property type="project" value="TreeGrafter"/>
</dbReference>
<dbReference type="CDD" id="cd08927">
    <property type="entry name" value="Hb-alpha-like"/>
    <property type="match status" value="1"/>
</dbReference>
<dbReference type="FunFam" id="1.10.490.10:FF:000002">
    <property type="entry name" value="Hemoglobin subunit alpha"/>
    <property type="match status" value="1"/>
</dbReference>
<dbReference type="Gene3D" id="1.10.490.10">
    <property type="entry name" value="Globins"/>
    <property type="match status" value="1"/>
</dbReference>
<dbReference type="InterPro" id="IPR000971">
    <property type="entry name" value="Globin"/>
</dbReference>
<dbReference type="InterPro" id="IPR009050">
    <property type="entry name" value="Globin-like_sf"/>
</dbReference>
<dbReference type="InterPro" id="IPR012292">
    <property type="entry name" value="Globin/Proto"/>
</dbReference>
<dbReference type="InterPro" id="IPR002338">
    <property type="entry name" value="Hemoglobin_a-typ"/>
</dbReference>
<dbReference type="InterPro" id="IPR050056">
    <property type="entry name" value="Hemoglobin_oxygen_transport"/>
</dbReference>
<dbReference type="InterPro" id="IPR002339">
    <property type="entry name" value="Hemoglobin_pi"/>
</dbReference>
<dbReference type="PANTHER" id="PTHR11442">
    <property type="entry name" value="HEMOGLOBIN FAMILY MEMBER"/>
    <property type="match status" value="1"/>
</dbReference>
<dbReference type="PANTHER" id="PTHR11442:SF48">
    <property type="entry name" value="HEMOGLOBIN SUBUNIT ALPHA"/>
    <property type="match status" value="1"/>
</dbReference>
<dbReference type="Pfam" id="PF00042">
    <property type="entry name" value="Globin"/>
    <property type="match status" value="1"/>
</dbReference>
<dbReference type="PRINTS" id="PR00612">
    <property type="entry name" value="ALPHAHAEM"/>
</dbReference>
<dbReference type="PRINTS" id="PR00815">
    <property type="entry name" value="PIHAEM"/>
</dbReference>
<dbReference type="SUPFAM" id="SSF46458">
    <property type="entry name" value="Globin-like"/>
    <property type="match status" value="1"/>
</dbReference>
<dbReference type="PROSITE" id="PS01033">
    <property type="entry name" value="GLOBIN"/>
    <property type="match status" value="1"/>
</dbReference>